<dbReference type="EC" id="3.3.2.9" evidence="7"/>
<dbReference type="EMBL" id="M15345">
    <property type="protein sequence ID" value="AAA41585.1"/>
    <property type="molecule type" value="Genomic_DNA"/>
</dbReference>
<dbReference type="EMBL" id="M15339">
    <property type="protein sequence ID" value="AAA41585.1"/>
    <property type="status" value="JOINED"/>
    <property type="molecule type" value="Genomic_DNA"/>
</dbReference>
<dbReference type="EMBL" id="M15340">
    <property type="protein sequence ID" value="AAA41585.1"/>
    <property type="status" value="JOINED"/>
    <property type="molecule type" value="Genomic_DNA"/>
</dbReference>
<dbReference type="EMBL" id="M15341">
    <property type="protein sequence ID" value="AAA41585.1"/>
    <property type="status" value="JOINED"/>
    <property type="molecule type" value="Genomic_DNA"/>
</dbReference>
<dbReference type="EMBL" id="M15342">
    <property type="protein sequence ID" value="AAA41585.1"/>
    <property type="status" value="JOINED"/>
    <property type="molecule type" value="Genomic_DNA"/>
</dbReference>
<dbReference type="EMBL" id="M15343">
    <property type="protein sequence ID" value="AAA41585.1"/>
    <property type="status" value="JOINED"/>
    <property type="molecule type" value="Genomic_DNA"/>
</dbReference>
<dbReference type="EMBL" id="M15344">
    <property type="protein sequence ID" value="AAA41585.1"/>
    <property type="status" value="JOINED"/>
    <property type="molecule type" value="Genomic_DNA"/>
</dbReference>
<dbReference type="EMBL" id="M26125">
    <property type="protein sequence ID" value="AAA42350.1"/>
    <property type="molecule type" value="mRNA"/>
</dbReference>
<dbReference type="EMBL" id="BC061568">
    <property type="protein sequence ID" value="AAH61568.1"/>
    <property type="molecule type" value="mRNA"/>
</dbReference>
<dbReference type="PIR" id="A26732">
    <property type="entry name" value="A26081"/>
</dbReference>
<dbReference type="RefSeq" id="NP_001029262.1">
    <property type="nucleotide sequence ID" value="NM_001034090.4"/>
</dbReference>
<dbReference type="RefSeq" id="NP_036976.2">
    <property type="nucleotide sequence ID" value="NM_012844.4"/>
</dbReference>
<dbReference type="RefSeq" id="XP_038946306.1">
    <property type="nucleotide sequence ID" value="XM_039090378.2"/>
</dbReference>
<dbReference type="SMR" id="P07687"/>
<dbReference type="FunCoup" id="P07687">
    <property type="interactions" value="779"/>
</dbReference>
<dbReference type="IntAct" id="P07687">
    <property type="interactions" value="3"/>
</dbReference>
<dbReference type="STRING" id="10116.ENSRNOP00000004780"/>
<dbReference type="ChEMBL" id="CHEMBL2299"/>
<dbReference type="ESTHER" id="ratno-hyep">
    <property type="family name" value="Epoxide_hydrolase"/>
</dbReference>
<dbReference type="MEROPS" id="S33.971"/>
<dbReference type="iPTMnet" id="P07687"/>
<dbReference type="PhosphoSitePlus" id="P07687"/>
<dbReference type="jPOST" id="P07687"/>
<dbReference type="PaxDb" id="10116-ENSRNOP00000004780"/>
<dbReference type="Ensembl" id="ENSRNOT00000004780.5">
    <property type="protein sequence ID" value="ENSRNOP00000004780.2"/>
    <property type="gene ID" value="ENSRNOG00000003515.7"/>
</dbReference>
<dbReference type="GeneID" id="25315"/>
<dbReference type="KEGG" id="rno:25315"/>
<dbReference type="UCSC" id="RGD:2557">
    <property type="organism name" value="rat"/>
</dbReference>
<dbReference type="AGR" id="RGD:2557"/>
<dbReference type="CTD" id="2052"/>
<dbReference type="RGD" id="2557">
    <property type="gene designation" value="Ephx1"/>
</dbReference>
<dbReference type="eggNOG" id="KOG2565">
    <property type="taxonomic scope" value="Eukaryota"/>
</dbReference>
<dbReference type="GeneTree" id="ENSGT00390000002210"/>
<dbReference type="InParanoid" id="P07687"/>
<dbReference type="OrthoDB" id="7130006at2759"/>
<dbReference type="PhylomeDB" id="P07687"/>
<dbReference type="TreeFam" id="TF313813"/>
<dbReference type="BRENDA" id="3.3.2.9">
    <property type="organism ID" value="5301"/>
</dbReference>
<dbReference type="Reactome" id="R-RNO-211945">
    <property type="pathway name" value="Phase I - Functionalization of compounds"/>
</dbReference>
<dbReference type="SABIO-RK" id="P07687"/>
<dbReference type="PRO" id="PR:P07687"/>
<dbReference type="Proteomes" id="UP000002494">
    <property type="component" value="Chromosome 13"/>
</dbReference>
<dbReference type="Bgee" id="ENSRNOG00000003515">
    <property type="expression patterns" value="Expressed in liver and 19 other cell types or tissues"/>
</dbReference>
<dbReference type="GO" id="GO:0005789">
    <property type="term" value="C:endoplasmic reticulum membrane"/>
    <property type="evidence" value="ECO:0007669"/>
    <property type="project" value="UniProtKB-SubCell"/>
</dbReference>
<dbReference type="GO" id="GO:0043231">
    <property type="term" value="C:intracellular membrane-bounded organelle"/>
    <property type="evidence" value="ECO:0000314"/>
    <property type="project" value="UniProtKB"/>
</dbReference>
<dbReference type="GO" id="GO:0016020">
    <property type="term" value="C:membrane"/>
    <property type="evidence" value="ECO:0000314"/>
    <property type="project" value="UniProtKB"/>
</dbReference>
<dbReference type="GO" id="GO:0033961">
    <property type="term" value="F:cis-stilbene-oxide hydrolase activity"/>
    <property type="evidence" value="ECO:0000315"/>
    <property type="project" value="UniProtKB"/>
</dbReference>
<dbReference type="GO" id="GO:0019899">
    <property type="term" value="F:enzyme binding"/>
    <property type="evidence" value="ECO:0000353"/>
    <property type="project" value="RGD"/>
</dbReference>
<dbReference type="GO" id="GO:0004301">
    <property type="term" value="F:epoxide hydrolase activity"/>
    <property type="evidence" value="ECO:0000314"/>
    <property type="project" value="RGD"/>
</dbReference>
<dbReference type="GO" id="GO:0008142">
    <property type="term" value="F:oxysterol binding"/>
    <property type="evidence" value="ECO:0000250"/>
    <property type="project" value="UniProtKB"/>
</dbReference>
<dbReference type="GO" id="GO:0019369">
    <property type="term" value="P:arachidonate metabolic process"/>
    <property type="evidence" value="ECO:0000250"/>
    <property type="project" value="UniProtKB"/>
</dbReference>
<dbReference type="GO" id="GO:0071385">
    <property type="term" value="P:cellular response to glucocorticoid stimulus"/>
    <property type="evidence" value="ECO:0000270"/>
    <property type="project" value="RGD"/>
</dbReference>
<dbReference type="GO" id="GO:0034312">
    <property type="term" value="P:diol biosynthetic process"/>
    <property type="evidence" value="ECO:0000314"/>
    <property type="project" value="RGD"/>
</dbReference>
<dbReference type="GO" id="GO:0097176">
    <property type="term" value="P:epoxide metabolic process"/>
    <property type="evidence" value="ECO:0000314"/>
    <property type="project" value="UniProtKB"/>
</dbReference>
<dbReference type="GO" id="GO:0120253">
    <property type="term" value="P:hydrocarbon catabolic process"/>
    <property type="evidence" value="ECO:0000266"/>
    <property type="project" value="RGD"/>
</dbReference>
<dbReference type="GO" id="GO:0001889">
    <property type="term" value="P:liver development"/>
    <property type="evidence" value="ECO:0000270"/>
    <property type="project" value="RGD"/>
</dbReference>
<dbReference type="GO" id="GO:1903165">
    <property type="term" value="P:response to polycyclic arene"/>
    <property type="evidence" value="ECO:0000266"/>
    <property type="project" value="RGD"/>
</dbReference>
<dbReference type="GO" id="GO:0009636">
    <property type="term" value="P:response to toxic substance"/>
    <property type="evidence" value="ECO:0007669"/>
    <property type="project" value="UniProtKB-KW"/>
</dbReference>
<dbReference type="FunFam" id="3.40.50.1820:FF:000172">
    <property type="entry name" value="Epoxide hydrolase"/>
    <property type="match status" value="1"/>
</dbReference>
<dbReference type="Gene3D" id="3.40.50.1820">
    <property type="entry name" value="alpha/beta hydrolase"/>
    <property type="match status" value="1"/>
</dbReference>
<dbReference type="InterPro" id="IPR029058">
    <property type="entry name" value="AB_hydrolase_fold"/>
</dbReference>
<dbReference type="InterPro" id="IPR000639">
    <property type="entry name" value="Epox_hydrolase-like"/>
</dbReference>
<dbReference type="InterPro" id="IPR010497">
    <property type="entry name" value="Epoxide_hydro_N"/>
</dbReference>
<dbReference type="InterPro" id="IPR016292">
    <property type="entry name" value="Epoxide_hydrolase"/>
</dbReference>
<dbReference type="PANTHER" id="PTHR21661:SF78">
    <property type="entry name" value="EPOXIDE HYDROLASE 1"/>
    <property type="match status" value="1"/>
</dbReference>
<dbReference type="PANTHER" id="PTHR21661">
    <property type="entry name" value="EPOXIDE HYDROLASE 1-RELATED"/>
    <property type="match status" value="1"/>
</dbReference>
<dbReference type="Pfam" id="PF06441">
    <property type="entry name" value="EHN"/>
    <property type="match status" value="1"/>
</dbReference>
<dbReference type="PIRSF" id="PIRSF001112">
    <property type="entry name" value="Epoxide_hydrolase"/>
    <property type="match status" value="1"/>
</dbReference>
<dbReference type="PRINTS" id="PR00412">
    <property type="entry name" value="EPOXHYDRLASE"/>
</dbReference>
<dbReference type="SUPFAM" id="SSF53474">
    <property type="entry name" value="alpha/beta-Hydrolases"/>
    <property type="match status" value="1"/>
</dbReference>
<feature type="chain" id="PRO_0000080859" description="Epoxide hydrolase 1">
    <location>
        <begin position="1"/>
        <end position="455"/>
    </location>
</feature>
<feature type="transmembrane region" description="Helical; Signal-anchor for type III membrane protein" evidence="4">
    <location>
        <begin position="1"/>
        <end position="21"/>
    </location>
</feature>
<feature type="topological domain" description="Cytoplasmic" evidence="9">
    <location>
        <begin position="22"/>
        <end position="455"/>
    </location>
</feature>
<feature type="active site" description="Nucleophile" evidence="7">
    <location>
        <position position="226"/>
    </location>
</feature>
<feature type="active site" description="Proton donor" evidence="2">
    <location>
        <position position="374"/>
    </location>
</feature>
<feature type="active site" description="Proton acceptor" evidence="10">
    <location>
        <position position="431"/>
    </location>
</feature>
<feature type="modified residue" description="Dimethylated arginine" evidence="5">
    <location>
        <position position="295"/>
    </location>
</feature>
<feature type="modified residue" description="N6-acetyllysine" evidence="3">
    <location>
        <position position="439"/>
    </location>
</feature>
<feature type="mutagenesis site" description="Loss of catalytic activity and loss of covalent substrate binding." evidence="7">
    <original>D</original>
    <variation>G</variation>
    <variation>N</variation>
    <variation>S</variation>
    <location>
        <position position="226"/>
    </location>
</feature>
<feature type="mutagenesis site" description="Slight decrease in catalytic activity." evidence="7">
    <original>E</original>
    <variation>A</variation>
    <location>
        <position position="388"/>
    </location>
</feature>
<feature type="mutagenesis site" description="Loss of catalytic activity." evidence="7">
    <original>E</original>
    <variation>A</variation>
    <location>
        <position position="404"/>
    </location>
</feature>
<feature type="mutagenesis site" description="Increases catalytic activity." evidence="7">
    <original>E</original>
    <variation>D</variation>
    <location>
        <position position="404"/>
    </location>
</feature>
<feature type="mutagenesis site" description="Slight decrease in catalytic activity." evidence="7">
    <original>E</original>
    <variation>A</variation>
    <location>
        <position position="410"/>
    </location>
</feature>
<feature type="mutagenesis site" description="Loss of catalytic activity and severe reduction in substrate binding." evidence="7">
    <original>H</original>
    <variation>Q</variation>
    <location>
        <position position="431"/>
    </location>
</feature>
<feature type="sequence conflict" description="In Ref. 1; AAA41585." evidence="8" ref="1">
    <location>
        <begin position="348"/>
        <end position="389"/>
    </location>
</feature>
<proteinExistence type="evidence at protein level"/>
<gene>
    <name evidence="11" type="primary">Ephx1</name>
    <name type="synonym">Eph-1</name>
</gene>
<comment type="function">
    <text evidence="1 3 7">Biotransformation enzyme that catalyzes the hydrolysis of arene and aliphatic epoxides to less reactive and more water soluble dihydrodiols by the trans addition of water. May play a role in the metabolism of endogenous lipids such as epoxide-containing fatty acids. Metabolizes the abundant endocannabinoid 2-arachidonoylglycerol (2-AG) to free arachidonic acid (AA) and glycerol (By similarity). Binds 20(S)-hydroxycholesterol (20(S)-OHC) (By similarity).</text>
</comment>
<comment type="catalytic activity">
    <reaction evidence="7">
        <text>cis-stilbene oxide + H2O = (1R,2R)-hydrobenzoin</text>
        <dbReference type="Rhea" id="RHEA:23900"/>
        <dbReference type="ChEBI" id="CHEBI:15377"/>
        <dbReference type="ChEBI" id="CHEBI:50004"/>
        <dbReference type="ChEBI" id="CHEBI:50014"/>
        <dbReference type="EC" id="3.3.2.9"/>
    </reaction>
    <physiologicalReaction direction="left-to-right" evidence="10">
        <dbReference type="Rhea" id="RHEA:23901"/>
    </physiologicalReaction>
</comment>
<comment type="catalytic activity">
    <reaction evidence="7">
        <text>1-(4-methoxyphenyl)-N-methyl-N-[(3-methyloxetan-3-yl)methyl]methanamine + H2O = 2-{[(4-methoxybenzyl)(methyl)amino]methyl}-2-methylpropane-1,3-diol</text>
        <dbReference type="Rhea" id="RHEA:55764"/>
        <dbReference type="ChEBI" id="CHEBI:15377"/>
        <dbReference type="ChEBI" id="CHEBI:139161"/>
        <dbReference type="ChEBI" id="CHEBI:139164"/>
        <dbReference type="EC" id="3.3.2.9"/>
    </reaction>
</comment>
<comment type="catalytic activity">
    <reaction evidence="1">
        <text>8,9-epoxy-(5Z,11Z,14Z)-eicosatrienoate + H2O = 8,9-dihydroxy-(5Z,11Z,14Z)-eicosatrienoate</text>
        <dbReference type="Rhea" id="RHEA:44048"/>
        <dbReference type="ChEBI" id="CHEBI:15377"/>
        <dbReference type="ChEBI" id="CHEBI:84025"/>
        <dbReference type="ChEBI" id="CHEBI:84032"/>
    </reaction>
    <physiologicalReaction direction="left-to-right" evidence="1">
        <dbReference type="Rhea" id="RHEA:44049"/>
    </physiologicalReaction>
</comment>
<comment type="catalytic activity">
    <reaction evidence="1">
        <text>11,12-epoxy-(5Z,8Z,14Z)-eicosatrienoate + H2O = 11,12-dihydroxy-(5Z,8Z,14Z)-eicosatrienoate</text>
        <dbReference type="Rhea" id="RHEA:44044"/>
        <dbReference type="ChEBI" id="CHEBI:15377"/>
        <dbReference type="ChEBI" id="CHEBI:76625"/>
        <dbReference type="ChEBI" id="CHEBI:84031"/>
    </reaction>
    <physiologicalReaction direction="left-to-right" evidence="1">
        <dbReference type="Rhea" id="RHEA:44045"/>
    </physiologicalReaction>
</comment>
<comment type="catalytic activity">
    <reaction evidence="1">
        <text>2-(5Z,8Z,11Z,14Z-eicosatetraenoyl)-glycerol + H2O = glycerol + (5Z,8Z,11Z,14Z)-eicosatetraenoate + H(+)</text>
        <dbReference type="Rhea" id="RHEA:26132"/>
        <dbReference type="ChEBI" id="CHEBI:15377"/>
        <dbReference type="ChEBI" id="CHEBI:15378"/>
        <dbReference type="ChEBI" id="CHEBI:17754"/>
        <dbReference type="ChEBI" id="CHEBI:32395"/>
        <dbReference type="ChEBI" id="CHEBI:52392"/>
    </reaction>
    <physiologicalReaction direction="left-to-right" evidence="1">
        <dbReference type="Rhea" id="RHEA:26133"/>
    </physiologicalReaction>
</comment>
<comment type="activity regulation">
    <text evidence="1">Inhibited by 10-hydroxystearamide and methoxy-arachidonyl fluorophosphate.</text>
</comment>
<comment type="biophysicochemical properties">
    <kinetics>
        <KM evidence="7">87.5 uM for styrene 7,8-oxide</KM>
        <KM evidence="7">6.8 uM for 9,10-epoxystearic acid</KM>
        <Vmax evidence="7">365.0 nmol/min/mg enzyme with styrene 7,8-oxide as substrate</Vmax>
        <Vmax evidence="7">10.0 nmol/min/mg enzyme with 9,10-epoxystearic acid as substrate</Vmax>
    </kinetics>
</comment>
<comment type="subcellular location">
    <subcellularLocation>
        <location evidence="7">Microsome membrane</location>
        <topology evidence="6">Single-pass type III membrane protein</topology>
    </subcellularLocation>
    <subcellularLocation>
        <location evidence="8">Endoplasmic reticulum membrane</location>
        <topology evidence="6">Single-pass type III membrane protein</topology>
    </subcellularLocation>
</comment>
<comment type="similarity">
    <text evidence="8">Belongs to the peptidase S33 family.</text>
</comment>
<accession>P07687</accession>
<protein>
    <recommendedName>
        <fullName evidence="8">Epoxide hydrolase 1</fullName>
        <ecNumber evidence="7">3.3.2.9</ecNumber>
    </recommendedName>
    <alternativeName>
        <fullName>Epoxide hydratase</fullName>
    </alternativeName>
    <alternativeName>
        <fullName>Microsomal epoxide hydrolase</fullName>
        <shortName evidence="8">mEH</shortName>
    </alternativeName>
</protein>
<reference key="1">
    <citation type="journal article" date="1987" name="J. Biol. Chem.">
        <title>Structure and organization of the microsomal xenobiotic epoxide hydrolase gene.</title>
        <authorList>
            <person name="Falany C.N."/>
            <person name="McQuiddy P."/>
            <person name="Kasper C.B."/>
        </authorList>
    </citation>
    <scope>NUCLEOTIDE SEQUENCE [GENOMIC DNA]</scope>
</reference>
<reference key="2">
    <citation type="journal article" date="1986" name="Arch. Biochem. Biophys.">
        <title>Complementary DNA and amino acid sequence of rat liver microsomal, xenobiotic epoxide hydrolase.</title>
        <authorList>
            <person name="Porter T.D."/>
            <person name="Beck T.W."/>
            <person name="Kasper C.B."/>
        </authorList>
    </citation>
    <scope>NUCLEOTIDE SEQUENCE [MRNA]</scope>
</reference>
<reference key="3">
    <citation type="journal article" date="2004" name="Genome Res.">
        <title>The status, quality, and expansion of the NIH full-length cDNA project: the Mammalian Gene Collection (MGC).</title>
        <authorList>
            <consortium name="The MGC Project Team"/>
        </authorList>
    </citation>
    <scope>NUCLEOTIDE SEQUENCE [LARGE SCALE MRNA]</scope>
    <source>
        <tissue>Pituitary</tissue>
    </source>
</reference>
<reference key="4">
    <citation type="journal article" date="1997" name="Biochem. Biophys. Res. Commun.">
        <title>The membrane anchor of microsomal epoxide hydrolase from human, rat, and rabbit displays an unexpected membrane topology.</title>
        <authorList>
            <person name="Holler R."/>
            <person name="Arand M."/>
            <person name="Mecky A."/>
            <person name="Oesch F."/>
            <person name="Friedberg T."/>
            <person name="Meckey A."/>
        </authorList>
    </citation>
    <scope>SUBCELLULAR LOCATION</scope>
    <scope>TOPOLOGY</scope>
</reference>
<reference key="5">
    <citation type="journal article" date="1999" name="Biochem. J.">
        <title>Catalytic triad of microsomal epoxide hydrolase: replacement of Glu404 with Asp leads to a strongly increased turnover rate.</title>
        <authorList>
            <person name="Arand M."/>
            <person name="Mueller F."/>
            <person name="Mecky A."/>
            <person name="Hinz W."/>
            <person name="Urban P."/>
            <person name="Pompon D."/>
            <person name="Kellner R."/>
            <person name="Oesch F."/>
        </authorList>
    </citation>
    <scope>FUNCTION</scope>
    <scope>CATALYTIC ACTIVITY</scope>
    <scope>BIOPHYSICOCHEMICAL PROPERTIES</scope>
    <scope>SUBCELLULAR LOCATION</scope>
    <scope>ACTIVE SITE</scope>
    <scope>MUTAGENESIS OF ASP-226; GLU-388; GLU-404; GLU-410 AND HIS-431</scope>
</reference>
<reference key="6">
    <citation type="journal article" date="2004" name="Mol. Biol. Cell">
        <title>Organellar proteomics reveals Golgi arginine dimethylation.</title>
        <authorList>
            <person name="Wu C.C."/>
            <person name="MacCoss M.J."/>
            <person name="Mardones G."/>
            <person name="Finnigan C."/>
            <person name="Mogelsvang S."/>
            <person name="Yates J.R. III"/>
            <person name="Howell K.E."/>
        </authorList>
    </citation>
    <scope>METHYLATION AT ARG-295</scope>
    <scope>IDENTIFICATION BY MASS SPECTROMETRY</scope>
</reference>
<name>HYEP_RAT</name>
<organism>
    <name type="scientific">Rattus norvegicus</name>
    <name type="common">Rat</name>
    <dbReference type="NCBI Taxonomy" id="10116"/>
    <lineage>
        <taxon>Eukaryota</taxon>
        <taxon>Metazoa</taxon>
        <taxon>Chordata</taxon>
        <taxon>Craniata</taxon>
        <taxon>Vertebrata</taxon>
        <taxon>Euteleostomi</taxon>
        <taxon>Mammalia</taxon>
        <taxon>Eutheria</taxon>
        <taxon>Euarchontoglires</taxon>
        <taxon>Glires</taxon>
        <taxon>Rodentia</taxon>
        <taxon>Myomorpha</taxon>
        <taxon>Muroidea</taxon>
        <taxon>Muridae</taxon>
        <taxon>Murinae</taxon>
        <taxon>Rattus</taxon>
    </lineage>
</organism>
<evidence type="ECO:0000250" key="1">
    <source>
        <dbReference type="UniProtKB" id="P07099"/>
    </source>
</evidence>
<evidence type="ECO:0000250" key="2">
    <source>
        <dbReference type="UniProtKB" id="P34913"/>
    </source>
</evidence>
<evidence type="ECO:0000250" key="3">
    <source>
        <dbReference type="UniProtKB" id="Q9D379"/>
    </source>
</evidence>
<evidence type="ECO:0000255" key="4"/>
<evidence type="ECO:0000269" key="5">
    <source>
    </source>
</evidence>
<evidence type="ECO:0000269" key="6">
    <source>
    </source>
</evidence>
<evidence type="ECO:0000269" key="7">
    <source>
    </source>
</evidence>
<evidence type="ECO:0000305" key="8"/>
<evidence type="ECO:0000305" key="9">
    <source>
    </source>
</evidence>
<evidence type="ECO:0000305" key="10">
    <source>
    </source>
</evidence>
<evidence type="ECO:0000312" key="11">
    <source>
        <dbReference type="RGD" id="2557"/>
    </source>
</evidence>
<keyword id="KW-0007">Acetylation</keyword>
<keyword id="KW-0058">Aromatic hydrocarbons catabolism</keyword>
<keyword id="KW-0216">Detoxification</keyword>
<keyword id="KW-0256">Endoplasmic reticulum</keyword>
<keyword id="KW-0378">Hydrolase</keyword>
<keyword id="KW-0443">Lipid metabolism</keyword>
<keyword id="KW-0472">Membrane</keyword>
<keyword id="KW-0488">Methylation</keyword>
<keyword id="KW-0492">Microsome</keyword>
<keyword id="KW-1185">Reference proteome</keyword>
<keyword id="KW-0735">Signal-anchor</keyword>
<keyword id="KW-0812">Transmembrane</keyword>
<keyword id="KW-1133">Transmembrane helix</keyword>
<sequence>MWLELVLASLLGFVIYWFVSRDKEETLPLGDGWWGPGSKPSAKEDESIRPFKVETSDEEIKDLHQRIDRFRASPPLEGSRFHYGFNSNYMKKVVSYWRNEFDWRKQVEILNQYPHFKTKIEGLDIHFIHVKPPQLPSGRTPKPLLMVHGWPGSFYEFYKIIPLLTDPKSHGLSDEHVFEVICPSIPGYGYSEASSKKGLNSVATARIFYKLMTRLGFQKFYIQGGDWGSLICTNMAQMVPNHVKGLHLNMAFISRSFYTMTPLLGQRFGRFLGYTEKDIELLYPYKEKVFYSIMRESGYLHIQATKPDTVGCALNDSPVGLAAYILEKFSTWTKSEYRELEDGGLERKFSLDDLLVNIMIYWTTGTIVSSQRYYKENLGQGIMVHKHEGMKVFVPTGFSAFPSELLHAPEKWVKVKYPKLISYSYMERGGHFAAFEEPKLLAQDIRKFVSLAELQ</sequence>